<organism>
    <name type="scientific">Archaeoglobus fulgidus (strain ATCC 49558 / DSM 4304 / JCM 9628 / NBRC 100126 / VC-16)</name>
    <dbReference type="NCBI Taxonomy" id="224325"/>
    <lineage>
        <taxon>Archaea</taxon>
        <taxon>Methanobacteriati</taxon>
        <taxon>Methanobacteriota</taxon>
        <taxon>Archaeoglobi</taxon>
        <taxon>Archaeoglobales</taxon>
        <taxon>Archaeoglobaceae</taxon>
        <taxon>Archaeoglobus</taxon>
    </lineage>
</organism>
<evidence type="ECO:0000255" key="1">
    <source>
        <dbReference type="HAMAP-Rule" id="MF_01227"/>
    </source>
</evidence>
<accession>O29987</accession>
<gene>
    <name evidence="1" type="primary">pyrG</name>
    <name type="ordered locus">AF_0252</name>
</gene>
<dbReference type="EC" id="6.3.4.2" evidence="1"/>
<dbReference type="EMBL" id="AE000782">
    <property type="protein sequence ID" value="AAB90978.1"/>
    <property type="molecule type" value="Genomic_DNA"/>
</dbReference>
<dbReference type="PIR" id="D69281">
    <property type="entry name" value="D69281"/>
</dbReference>
<dbReference type="RefSeq" id="WP_010877763.1">
    <property type="nucleotide sequence ID" value="NC_000917.1"/>
</dbReference>
<dbReference type="SMR" id="O29987"/>
<dbReference type="STRING" id="224325.AF_0252"/>
<dbReference type="MEROPS" id="C26.964"/>
<dbReference type="PaxDb" id="224325-AF_0252"/>
<dbReference type="EnsemblBacteria" id="AAB90978">
    <property type="protein sequence ID" value="AAB90978"/>
    <property type="gene ID" value="AF_0252"/>
</dbReference>
<dbReference type="GeneID" id="24793785"/>
<dbReference type="KEGG" id="afu:AF_0252"/>
<dbReference type="eggNOG" id="arCOG00063">
    <property type="taxonomic scope" value="Archaea"/>
</dbReference>
<dbReference type="HOGENOM" id="CLU_011675_5_0_2"/>
<dbReference type="OrthoDB" id="52769at2157"/>
<dbReference type="PhylomeDB" id="O29987"/>
<dbReference type="UniPathway" id="UPA00159">
    <property type="reaction ID" value="UER00277"/>
</dbReference>
<dbReference type="Proteomes" id="UP000002199">
    <property type="component" value="Chromosome"/>
</dbReference>
<dbReference type="GO" id="GO:0005524">
    <property type="term" value="F:ATP binding"/>
    <property type="evidence" value="ECO:0007669"/>
    <property type="project" value="UniProtKB-KW"/>
</dbReference>
<dbReference type="GO" id="GO:0003883">
    <property type="term" value="F:CTP synthase activity"/>
    <property type="evidence" value="ECO:0007669"/>
    <property type="project" value="UniProtKB-UniRule"/>
</dbReference>
<dbReference type="GO" id="GO:0004359">
    <property type="term" value="F:glutaminase activity"/>
    <property type="evidence" value="ECO:0007669"/>
    <property type="project" value="RHEA"/>
</dbReference>
<dbReference type="GO" id="GO:0042802">
    <property type="term" value="F:identical protein binding"/>
    <property type="evidence" value="ECO:0007669"/>
    <property type="project" value="TreeGrafter"/>
</dbReference>
<dbReference type="GO" id="GO:0046872">
    <property type="term" value="F:metal ion binding"/>
    <property type="evidence" value="ECO:0007669"/>
    <property type="project" value="UniProtKB-KW"/>
</dbReference>
<dbReference type="GO" id="GO:0044210">
    <property type="term" value="P:'de novo' CTP biosynthetic process"/>
    <property type="evidence" value="ECO:0007669"/>
    <property type="project" value="UniProtKB-UniRule"/>
</dbReference>
<dbReference type="GO" id="GO:0019856">
    <property type="term" value="P:pyrimidine nucleobase biosynthetic process"/>
    <property type="evidence" value="ECO:0007669"/>
    <property type="project" value="TreeGrafter"/>
</dbReference>
<dbReference type="CDD" id="cd03113">
    <property type="entry name" value="CTPS_N"/>
    <property type="match status" value="1"/>
</dbReference>
<dbReference type="CDD" id="cd01746">
    <property type="entry name" value="GATase1_CTP_Synthase"/>
    <property type="match status" value="1"/>
</dbReference>
<dbReference type="FunFam" id="3.40.50.300:FF:000009">
    <property type="entry name" value="CTP synthase"/>
    <property type="match status" value="1"/>
</dbReference>
<dbReference type="FunFam" id="3.40.50.880:FF:000002">
    <property type="entry name" value="CTP synthase"/>
    <property type="match status" value="1"/>
</dbReference>
<dbReference type="Gene3D" id="3.40.50.880">
    <property type="match status" value="1"/>
</dbReference>
<dbReference type="Gene3D" id="3.40.50.300">
    <property type="entry name" value="P-loop containing nucleotide triphosphate hydrolases"/>
    <property type="match status" value="1"/>
</dbReference>
<dbReference type="HAMAP" id="MF_01227">
    <property type="entry name" value="PyrG"/>
    <property type="match status" value="1"/>
</dbReference>
<dbReference type="InterPro" id="IPR029062">
    <property type="entry name" value="Class_I_gatase-like"/>
</dbReference>
<dbReference type="InterPro" id="IPR004468">
    <property type="entry name" value="CTP_synthase"/>
</dbReference>
<dbReference type="InterPro" id="IPR017456">
    <property type="entry name" value="CTP_synthase_N"/>
</dbReference>
<dbReference type="InterPro" id="IPR017926">
    <property type="entry name" value="GATASE"/>
</dbReference>
<dbReference type="InterPro" id="IPR033828">
    <property type="entry name" value="GATase1_CTP_Synthase"/>
</dbReference>
<dbReference type="InterPro" id="IPR027417">
    <property type="entry name" value="P-loop_NTPase"/>
</dbReference>
<dbReference type="NCBIfam" id="NF003792">
    <property type="entry name" value="PRK05380.1"/>
    <property type="match status" value="1"/>
</dbReference>
<dbReference type="NCBIfam" id="TIGR00337">
    <property type="entry name" value="PyrG"/>
    <property type="match status" value="1"/>
</dbReference>
<dbReference type="PANTHER" id="PTHR11550">
    <property type="entry name" value="CTP SYNTHASE"/>
    <property type="match status" value="1"/>
</dbReference>
<dbReference type="PANTHER" id="PTHR11550:SF0">
    <property type="entry name" value="CTP SYNTHASE-RELATED"/>
    <property type="match status" value="1"/>
</dbReference>
<dbReference type="Pfam" id="PF06418">
    <property type="entry name" value="CTP_synth_N"/>
    <property type="match status" value="1"/>
</dbReference>
<dbReference type="Pfam" id="PF00117">
    <property type="entry name" value="GATase"/>
    <property type="match status" value="1"/>
</dbReference>
<dbReference type="SUPFAM" id="SSF52317">
    <property type="entry name" value="Class I glutamine amidotransferase-like"/>
    <property type="match status" value="1"/>
</dbReference>
<dbReference type="SUPFAM" id="SSF52540">
    <property type="entry name" value="P-loop containing nucleoside triphosphate hydrolases"/>
    <property type="match status" value="1"/>
</dbReference>
<dbReference type="PROSITE" id="PS51273">
    <property type="entry name" value="GATASE_TYPE_1"/>
    <property type="match status" value="1"/>
</dbReference>
<reference key="1">
    <citation type="journal article" date="1997" name="Nature">
        <title>The complete genome sequence of the hyperthermophilic, sulphate-reducing archaeon Archaeoglobus fulgidus.</title>
        <authorList>
            <person name="Klenk H.-P."/>
            <person name="Clayton R.A."/>
            <person name="Tomb J.-F."/>
            <person name="White O."/>
            <person name="Nelson K.E."/>
            <person name="Ketchum K.A."/>
            <person name="Dodson R.J."/>
            <person name="Gwinn M.L."/>
            <person name="Hickey E.K."/>
            <person name="Peterson J.D."/>
            <person name="Richardson D.L."/>
            <person name="Kerlavage A.R."/>
            <person name="Graham D.E."/>
            <person name="Kyrpides N.C."/>
            <person name="Fleischmann R.D."/>
            <person name="Quackenbush J."/>
            <person name="Lee N.H."/>
            <person name="Sutton G.G."/>
            <person name="Gill S.R."/>
            <person name="Kirkness E.F."/>
            <person name="Dougherty B.A."/>
            <person name="McKenney K."/>
            <person name="Adams M.D."/>
            <person name="Loftus B.J."/>
            <person name="Peterson S.N."/>
            <person name="Reich C.I."/>
            <person name="McNeil L.K."/>
            <person name="Badger J.H."/>
            <person name="Glodek A."/>
            <person name="Zhou L."/>
            <person name="Overbeek R."/>
            <person name="Gocayne J.D."/>
            <person name="Weidman J.F."/>
            <person name="McDonald L.A."/>
            <person name="Utterback T.R."/>
            <person name="Cotton M.D."/>
            <person name="Spriggs T."/>
            <person name="Artiach P."/>
            <person name="Kaine B.P."/>
            <person name="Sykes S.M."/>
            <person name="Sadow P.W."/>
            <person name="D'Andrea K.P."/>
            <person name="Bowman C."/>
            <person name="Fujii C."/>
            <person name="Garland S.A."/>
            <person name="Mason T.M."/>
            <person name="Olsen G.J."/>
            <person name="Fraser C.M."/>
            <person name="Smith H.O."/>
            <person name="Woese C.R."/>
            <person name="Venter J.C."/>
        </authorList>
    </citation>
    <scope>NUCLEOTIDE SEQUENCE [LARGE SCALE GENOMIC DNA]</scope>
    <source>
        <strain>ATCC 49558 / DSM 4304 / JCM 9628 / NBRC 100126 / VC-16</strain>
    </source>
</reference>
<comment type="function">
    <text evidence="1">Catalyzes the ATP-dependent amination of UTP to CTP with either L-glutamine or ammonia as the source of nitrogen. Regulates intracellular CTP levels through interactions with the four ribonucleotide triphosphates.</text>
</comment>
<comment type="catalytic activity">
    <reaction evidence="1">
        <text>UTP + L-glutamine + ATP + H2O = CTP + L-glutamate + ADP + phosphate + 2 H(+)</text>
        <dbReference type="Rhea" id="RHEA:26426"/>
        <dbReference type="ChEBI" id="CHEBI:15377"/>
        <dbReference type="ChEBI" id="CHEBI:15378"/>
        <dbReference type="ChEBI" id="CHEBI:29985"/>
        <dbReference type="ChEBI" id="CHEBI:30616"/>
        <dbReference type="ChEBI" id="CHEBI:37563"/>
        <dbReference type="ChEBI" id="CHEBI:43474"/>
        <dbReference type="ChEBI" id="CHEBI:46398"/>
        <dbReference type="ChEBI" id="CHEBI:58359"/>
        <dbReference type="ChEBI" id="CHEBI:456216"/>
        <dbReference type="EC" id="6.3.4.2"/>
    </reaction>
</comment>
<comment type="catalytic activity">
    <reaction evidence="1">
        <text>L-glutamine + H2O = L-glutamate + NH4(+)</text>
        <dbReference type="Rhea" id="RHEA:15889"/>
        <dbReference type="ChEBI" id="CHEBI:15377"/>
        <dbReference type="ChEBI" id="CHEBI:28938"/>
        <dbReference type="ChEBI" id="CHEBI:29985"/>
        <dbReference type="ChEBI" id="CHEBI:58359"/>
    </reaction>
</comment>
<comment type="catalytic activity">
    <reaction evidence="1">
        <text>UTP + NH4(+) + ATP = CTP + ADP + phosphate + 2 H(+)</text>
        <dbReference type="Rhea" id="RHEA:16597"/>
        <dbReference type="ChEBI" id="CHEBI:15378"/>
        <dbReference type="ChEBI" id="CHEBI:28938"/>
        <dbReference type="ChEBI" id="CHEBI:30616"/>
        <dbReference type="ChEBI" id="CHEBI:37563"/>
        <dbReference type="ChEBI" id="CHEBI:43474"/>
        <dbReference type="ChEBI" id="CHEBI:46398"/>
        <dbReference type="ChEBI" id="CHEBI:456216"/>
    </reaction>
</comment>
<comment type="activity regulation">
    <text evidence="1">Allosterically activated by GTP, when glutamine is the substrate; GTP has no effect on the reaction when ammonia is the substrate. The allosteric effector GTP functions by stabilizing the protein conformation that binds the tetrahedral intermediate(s) formed during glutamine hydrolysis. Inhibited by the product CTP, via allosteric rather than competitive inhibition.</text>
</comment>
<comment type="pathway">
    <text evidence="1">Pyrimidine metabolism; CTP biosynthesis via de novo pathway; CTP from UDP: step 2/2.</text>
</comment>
<comment type="subunit">
    <text evidence="1">Homotetramer.</text>
</comment>
<comment type="miscellaneous">
    <text evidence="1">CTPSs have evolved a hybrid strategy for distinguishing between UTP and CTP. The overlapping regions of the product feedback inhibitory and substrate sites recognize a common feature in both compounds, the triphosphate moiety. To differentiate isosteric substrate and product pyrimidine rings, an additional pocket far from the expected kinase/ligase catalytic site, specifically recognizes the cytosine and ribose portions of the product inhibitor.</text>
</comment>
<comment type="similarity">
    <text evidence="1">Belongs to the CTP synthase family.</text>
</comment>
<name>PYRG_ARCFU</name>
<sequence>MKYIVVTGGVMSGLGKGITAASIGRLFVDMGYRVIPIKIDPYINIDAGTMNPFQHGEVYVLKDGTEVDLDLGHYERFIGEEVTGDHNITTGKIYKRVIEKERKGDYLGQTVQIIPHVTDEIKSWIRRVAKESNAEICLVEIGGTVGDIEGMPFLEAIRQMHNEEKEEDFALVHVTLVPLDAGGEQKTKPTQHSVKELRELGLHPDVIVGRCSERLKPATKKKIALFCDVPEEAVISNEDAEDIYEVPLIFKREKLDEYLMRKLNLRAKESRKEWEEMVKRMKTLYEEASIAIVGKYVDVRDAYLSIKEALKHGGIEAGCKVNIVWVDSEDLENVDDFTLDVDGILVPGGFGARGAEGKIRAIEYARENGVPFLGICFGFQLAVIEFARNVVGFSEANSTELDENTPHPVIDLLPEQKGIDEMGGTMRLGDIEVTIKPGTIAHKLYGSEKVVERHRHRYEVNPEYIEKIESKGLVFSAYSDGGRRMEIAELPDHPFFFATQFHPEFKSRPYRPSPPFVGFVRAALKYRREEEI</sequence>
<keyword id="KW-0067">ATP-binding</keyword>
<keyword id="KW-0315">Glutamine amidotransferase</keyword>
<keyword id="KW-0436">Ligase</keyword>
<keyword id="KW-0460">Magnesium</keyword>
<keyword id="KW-0479">Metal-binding</keyword>
<keyword id="KW-0547">Nucleotide-binding</keyword>
<keyword id="KW-0665">Pyrimidine biosynthesis</keyword>
<keyword id="KW-1185">Reference proteome</keyword>
<feature type="chain" id="PRO_0000138257" description="CTP synthase">
    <location>
        <begin position="1"/>
        <end position="532"/>
    </location>
</feature>
<feature type="domain" description="Glutamine amidotransferase type-1" evidence="1">
    <location>
        <begin position="289"/>
        <end position="529"/>
    </location>
</feature>
<feature type="region of interest" description="Amidoligase domain" evidence="1">
    <location>
        <begin position="1"/>
        <end position="265"/>
    </location>
</feature>
<feature type="active site" description="Nucleophile; for glutamine hydrolysis" evidence="1">
    <location>
        <position position="376"/>
    </location>
</feature>
<feature type="active site" evidence="1">
    <location>
        <position position="502"/>
    </location>
</feature>
<feature type="active site" evidence="1">
    <location>
        <position position="504"/>
    </location>
</feature>
<feature type="binding site" evidence="1">
    <location>
        <position position="12"/>
    </location>
    <ligand>
        <name>CTP</name>
        <dbReference type="ChEBI" id="CHEBI:37563"/>
        <note>allosteric inhibitor</note>
    </ligand>
</feature>
<feature type="binding site" evidence="1">
    <location>
        <position position="12"/>
    </location>
    <ligand>
        <name>UTP</name>
        <dbReference type="ChEBI" id="CHEBI:46398"/>
    </ligand>
</feature>
<feature type="binding site" evidence="1">
    <location>
        <begin position="13"/>
        <end position="18"/>
    </location>
    <ligand>
        <name>ATP</name>
        <dbReference type="ChEBI" id="CHEBI:30616"/>
    </ligand>
</feature>
<feature type="binding site" evidence="1">
    <location>
        <position position="70"/>
    </location>
    <ligand>
        <name>ATP</name>
        <dbReference type="ChEBI" id="CHEBI:30616"/>
    </ligand>
</feature>
<feature type="binding site" evidence="1">
    <location>
        <position position="70"/>
    </location>
    <ligand>
        <name>Mg(2+)</name>
        <dbReference type="ChEBI" id="CHEBI:18420"/>
    </ligand>
</feature>
<feature type="binding site" evidence="1">
    <location>
        <position position="140"/>
    </location>
    <ligand>
        <name>Mg(2+)</name>
        <dbReference type="ChEBI" id="CHEBI:18420"/>
    </ligand>
</feature>
<feature type="binding site" evidence="1">
    <location>
        <begin position="147"/>
        <end position="149"/>
    </location>
    <ligand>
        <name>CTP</name>
        <dbReference type="ChEBI" id="CHEBI:37563"/>
        <note>allosteric inhibitor</note>
    </ligand>
</feature>
<feature type="binding site" evidence="1">
    <location>
        <begin position="186"/>
        <end position="191"/>
    </location>
    <ligand>
        <name>CTP</name>
        <dbReference type="ChEBI" id="CHEBI:37563"/>
        <note>allosteric inhibitor</note>
    </ligand>
</feature>
<feature type="binding site" evidence="1">
    <location>
        <begin position="186"/>
        <end position="191"/>
    </location>
    <ligand>
        <name>UTP</name>
        <dbReference type="ChEBI" id="CHEBI:46398"/>
    </ligand>
</feature>
<feature type="binding site" evidence="1">
    <location>
        <position position="222"/>
    </location>
    <ligand>
        <name>CTP</name>
        <dbReference type="ChEBI" id="CHEBI:37563"/>
        <note>allosteric inhibitor</note>
    </ligand>
</feature>
<feature type="binding site" evidence="1">
    <location>
        <position position="222"/>
    </location>
    <ligand>
        <name>UTP</name>
        <dbReference type="ChEBI" id="CHEBI:46398"/>
    </ligand>
</feature>
<feature type="binding site" evidence="1">
    <location>
        <position position="349"/>
    </location>
    <ligand>
        <name>L-glutamine</name>
        <dbReference type="ChEBI" id="CHEBI:58359"/>
    </ligand>
</feature>
<feature type="binding site" evidence="1">
    <location>
        <begin position="377"/>
        <end position="380"/>
    </location>
    <ligand>
        <name>L-glutamine</name>
        <dbReference type="ChEBI" id="CHEBI:58359"/>
    </ligand>
</feature>
<feature type="binding site" evidence="1">
    <location>
        <position position="400"/>
    </location>
    <ligand>
        <name>L-glutamine</name>
        <dbReference type="ChEBI" id="CHEBI:58359"/>
    </ligand>
</feature>
<feature type="binding site" evidence="1">
    <location>
        <position position="457"/>
    </location>
    <ligand>
        <name>L-glutamine</name>
        <dbReference type="ChEBI" id="CHEBI:58359"/>
    </ligand>
</feature>
<proteinExistence type="inferred from homology"/>
<protein>
    <recommendedName>
        <fullName evidence="1">CTP synthase</fullName>
        <ecNumber evidence="1">6.3.4.2</ecNumber>
    </recommendedName>
    <alternativeName>
        <fullName evidence="1">Cytidine 5'-triphosphate synthase</fullName>
    </alternativeName>
    <alternativeName>
        <fullName evidence="1">Cytidine triphosphate synthetase</fullName>
        <shortName evidence="1">CTP synthetase</shortName>
        <shortName evidence="1">CTPS</shortName>
    </alternativeName>
    <alternativeName>
        <fullName evidence="1">UTP--ammonia ligase</fullName>
    </alternativeName>
</protein>